<accession>B2GD55</accession>
<gene>
    <name evidence="1" type="primary">fmt</name>
    <name type="ordered locus">LAF_1251</name>
</gene>
<comment type="function">
    <text evidence="1">Attaches a formyl group to the free amino group of methionyl-tRNA(fMet). The formyl group appears to play a dual role in the initiator identity of N-formylmethionyl-tRNA by promoting its recognition by IF2 and preventing the misappropriation of this tRNA by the elongation apparatus.</text>
</comment>
<comment type="catalytic activity">
    <reaction evidence="1">
        <text>L-methionyl-tRNA(fMet) + (6R)-10-formyltetrahydrofolate = N-formyl-L-methionyl-tRNA(fMet) + (6S)-5,6,7,8-tetrahydrofolate + H(+)</text>
        <dbReference type="Rhea" id="RHEA:24380"/>
        <dbReference type="Rhea" id="RHEA-COMP:9952"/>
        <dbReference type="Rhea" id="RHEA-COMP:9953"/>
        <dbReference type="ChEBI" id="CHEBI:15378"/>
        <dbReference type="ChEBI" id="CHEBI:57453"/>
        <dbReference type="ChEBI" id="CHEBI:78530"/>
        <dbReference type="ChEBI" id="CHEBI:78844"/>
        <dbReference type="ChEBI" id="CHEBI:195366"/>
        <dbReference type="EC" id="2.1.2.9"/>
    </reaction>
</comment>
<comment type="similarity">
    <text evidence="1">Belongs to the Fmt family.</text>
</comment>
<evidence type="ECO:0000255" key="1">
    <source>
        <dbReference type="HAMAP-Rule" id="MF_00182"/>
    </source>
</evidence>
<feature type="chain" id="PRO_1000098414" description="Methionyl-tRNA formyltransferase">
    <location>
        <begin position="1"/>
        <end position="316"/>
    </location>
</feature>
<feature type="binding site" evidence="1">
    <location>
        <begin position="111"/>
        <end position="114"/>
    </location>
    <ligand>
        <name>(6S)-5,6,7,8-tetrahydrofolate</name>
        <dbReference type="ChEBI" id="CHEBI:57453"/>
    </ligand>
</feature>
<proteinExistence type="inferred from homology"/>
<reference key="1">
    <citation type="journal article" date="2008" name="DNA Res.">
        <title>Comparative genome analysis of Lactobacillus reuteri and Lactobacillus fermentum reveal a genomic island for reuterin and cobalamin production.</title>
        <authorList>
            <person name="Morita H."/>
            <person name="Toh H."/>
            <person name="Fukuda S."/>
            <person name="Horikawa H."/>
            <person name="Oshima K."/>
            <person name="Suzuki T."/>
            <person name="Murakami M."/>
            <person name="Hisamatsu S."/>
            <person name="Kato Y."/>
            <person name="Takizawa T."/>
            <person name="Fukuoka H."/>
            <person name="Yoshimura T."/>
            <person name="Itoh K."/>
            <person name="O'Sullivan D.J."/>
            <person name="McKay L.L."/>
            <person name="Ohno H."/>
            <person name="Kikuchi J."/>
            <person name="Masaoka T."/>
            <person name="Hattori M."/>
        </authorList>
    </citation>
    <scope>NUCLEOTIDE SEQUENCE [LARGE SCALE GENOMIC DNA]</scope>
    <source>
        <strain>NBRC 3956 / LMG 18251</strain>
    </source>
</reference>
<organism>
    <name type="scientific">Limosilactobacillus fermentum (strain NBRC 3956 / LMG 18251)</name>
    <name type="common">Lactobacillus fermentum</name>
    <dbReference type="NCBI Taxonomy" id="334390"/>
    <lineage>
        <taxon>Bacteria</taxon>
        <taxon>Bacillati</taxon>
        <taxon>Bacillota</taxon>
        <taxon>Bacilli</taxon>
        <taxon>Lactobacillales</taxon>
        <taxon>Lactobacillaceae</taxon>
        <taxon>Limosilactobacillus</taxon>
    </lineage>
</organism>
<dbReference type="EC" id="2.1.2.9" evidence="1"/>
<dbReference type="EMBL" id="AP008937">
    <property type="protein sequence ID" value="BAG27587.1"/>
    <property type="molecule type" value="Genomic_DNA"/>
</dbReference>
<dbReference type="RefSeq" id="WP_003683834.1">
    <property type="nucleotide sequence ID" value="NC_010610.1"/>
</dbReference>
<dbReference type="SMR" id="B2GD55"/>
<dbReference type="GeneID" id="83714301"/>
<dbReference type="KEGG" id="lfe:LAF_1251"/>
<dbReference type="eggNOG" id="COG0223">
    <property type="taxonomic scope" value="Bacteria"/>
</dbReference>
<dbReference type="HOGENOM" id="CLU_033347_1_1_9"/>
<dbReference type="Proteomes" id="UP000001697">
    <property type="component" value="Chromosome"/>
</dbReference>
<dbReference type="GO" id="GO:0005829">
    <property type="term" value="C:cytosol"/>
    <property type="evidence" value="ECO:0007669"/>
    <property type="project" value="TreeGrafter"/>
</dbReference>
<dbReference type="GO" id="GO:0004479">
    <property type="term" value="F:methionyl-tRNA formyltransferase activity"/>
    <property type="evidence" value="ECO:0007669"/>
    <property type="project" value="UniProtKB-UniRule"/>
</dbReference>
<dbReference type="CDD" id="cd08646">
    <property type="entry name" value="FMT_core_Met-tRNA-FMT_N"/>
    <property type="match status" value="1"/>
</dbReference>
<dbReference type="CDD" id="cd08704">
    <property type="entry name" value="Met_tRNA_FMT_C"/>
    <property type="match status" value="1"/>
</dbReference>
<dbReference type="FunFam" id="3.40.50.170:FF:000004">
    <property type="entry name" value="Methionyl-tRNA formyltransferase"/>
    <property type="match status" value="1"/>
</dbReference>
<dbReference type="Gene3D" id="3.10.25.10">
    <property type="entry name" value="Formyl transferase, C-terminal domain"/>
    <property type="match status" value="1"/>
</dbReference>
<dbReference type="Gene3D" id="3.40.50.170">
    <property type="entry name" value="Formyl transferase, N-terminal domain"/>
    <property type="match status" value="1"/>
</dbReference>
<dbReference type="HAMAP" id="MF_00182">
    <property type="entry name" value="Formyl_trans"/>
    <property type="match status" value="1"/>
</dbReference>
<dbReference type="InterPro" id="IPR005794">
    <property type="entry name" value="Fmt"/>
</dbReference>
<dbReference type="InterPro" id="IPR005793">
    <property type="entry name" value="Formyl_trans_C"/>
</dbReference>
<dbReference type="InterPro" id="IPR037022">
    <property type="entry name" value="Formyl_trans_C_sf"/>
</dbReference>
<dbReference type="InterPro" id="IPR002376">
    <property type="entry name" value="Formyl_transf_N"/>
</dbReference>
<dbReference type="InterPro" id="IPR036477">
    <property type="entry name" value="Formyl_transf_N_sf"/>
</dbReference>
<dbReference type="InterPro" id="IPR011034">
    <property type="entry name" value="Formyl_transferase-like_C_sf"/>
</dbReference>
<dbReference type="InterPro" id="IPR001555">
    <property type="entry name" value="GART_AS"/>
</dbReference>
<dbReference type="InterPro" id="IPR044135">
    <property type="entry name" value="Met-tRNA-FMT_C"/>
</dbReference>
<dbReference type="InterPro" id="IPR041711">
    <property type="entry name" value="Met-tRNA-FMT_N"/>
</dbReference>
<dbReference type="NCBIfam" id="TIGR00460">
    <property type="entry name" value="fmt"/>
    <property type="match status" value="1"/>
</dbReference>
<dbReference type="PANTHER" id="PTHR11138">
    <property type="entry name" value="METHIONYL-TRNA FORMYLTRANSFERASE"/>
    <property type="match status" value="1"/>
</dbReference>
<dbReference type="PANTHER" id="PTHR11138:SF5">
    <property type="entry name" value="METHIONYL-TRNA FORMYLTRANSFERASE, MITOCHONDRIAL"/>
    <property type="match status" value="1"/>
</dbReference>
<dbReference type="Pfam" id="PF02911">
    <property type="entry name" value="Formyl_trans_C"/>
    <property type="match status" value="1"/>
</dbReference>
<dbReference type="Pfam" id="PF00551">
    <property type="entry name" value="Formyl_trans_N"/>
    <property type="match status" value="1"/>
</dbReference>
<dbReference type="SUPFAM" id="SSF50486">
    <property type="entry name" value="FMT C-terminal domain-like"/>
    <property type="match status" value="1"/>
</dbReference>
<dbReference type="SUPFAM" id="SSF53328">
    <property type="entry name" value="Formyltransferase"/>
    <property type="match status" value="1"/>
</dbReference>
<dbReference type="PROSITE" id="PS00373">
    <property type="entry name" value="GART"/>
    <property type="match status" value="1"/>
</dbReference>
<name>FMT_LIMF3</name>
<sequence>MKSIVFMGTPQFAVPILKALIDSEDYQVLAVVSQPDRRVGRKRELRATPVKELALENGIEVLTPEKINHSPEMDRVIELAPDLIITAAFGQFLPDKLLAAAKVAAINVHGSLLPKYRGGAPIQYAVMNGDAETGVTIMYMVKKMDAGDIISQASLPITKQDDTGTMFEKLSLLGRDLLLDTLPKLLAGDITPVKQDESQVVFSPNITREQETIDFTLPADRIDDLVRGLRPAPVGNMVIDGLRTKVYDVTPLTETTDLQPGQVVRVEKHALIIAAGAGTTYQINSLKPAGKPKMDITDYLNGHQNLKPGVQAINND</sequence>
<protein>
    <recommendedName>
        <fullName evidence="1">Methionyl-tRNA formyltransferase</fullName>
        <ecNumber evidence="1">2.1.2.9</ecNumber>
    </recommendedName>
</protein>
<keyword id="KW-0648">Protein biosynthesis</keyword>
<keyword id="KW-1185">Reference proteome</keyword>
<keyword id="KW-0808">Transferase</keyword>